<keyword id="KW-1185">Reference proteome</keyword>
<protein>
    <recommendedName>
        <fullName>Uncharacterized protein MJ1005</fullName>
    </recommendedName>
</protein>
<accession>Q58411</accession>
<sequence length="131" mass="15579">MRIEDEIKNIIEKKDYDFWEFLKKAYENNIKLDIGHFILLNILIGVNDLYHKLSEKFGEEEARKILERNKIFAKNSDFISGEFLKDYIDRKSRVAVHNRIKDLKTLGFKIESKSGPFGGYKIVGYPEWFKK</sequence>
<organism>
    <name type="scientific">Methanocaldococcus jannaschii (strain ATCC 43067 / DSM 2661 / JAL-1 / JCM 10045 / NBRC 100440)</name>
    <name type="common">Methanococcus jannaschii</name>
    <dbReference type="NCBI Taxonomy" id="243232"/>
    <lineage>
        <taxon>Archaea</taxon>
        <taxon>Methanobacteriati</taxon>
        <taxon>Methanobacteriota</taxon>
        <taxon>Methanomada group</taxon>
        <taxon>Methanococci</taxon>
        <taxon>Methanococcales</taxon>
        <taxon>Methanocaldococcaceae</taxon>
        <taxon>Methanocaldococcus</taxon>
    </lineage>
</organism>
<name>Y1005_METJA</name>
<reference key="1">
    <citation type="journal article" date="1996" name="Science">
        <title>Complete genome sequence of the methanogenic archaeon, Methanococcus jannaschii.</title>
        <authorList>
            <person name="Bult C.J."/>
            <person name="White O."/>
            <person name="Olsen G.J."/>
            <person name="Zhou L."/>
            <person name="Fleischmann R.D."/>
            <person name="Sutton G.G."/>
            <person name="Blake J.A."/>
            <person name="FitzGerald L.M."/>
            <person name="Clayton R.A."/>
            <person name="Gocayne J.D."/>
            <person name="Kerlavage A.R."/>
            <person name="Dougherty B.A."/>
            <person name="Tomb J.-F."/>
            <person name="Adams M.D."/>
            <person name="Reich C.I."/>
            <person name="Overbeek R."/>
            <person name="Kirkness E.F."/>
            <person name="Weinstock K.G."/>
            <person name="Merrick J.M."/>
            <person name="Glodek A."/>
            <person name="Scott J.L."/>
            <person name="Geoghagen N.S.M."/>
            <person name="Weidman J.F."/>
            <person name="Fuhrmann J.L."/>
            <person name="Nguyen D."/>
            <person name="Utterback T.R."/>
            <person name="Kelley J.M."/>
            <person name="Peterson J.D."/>
            <person name="Sadow P.W."/>
            <person name="Hanna M.C."/>
            <person name="Cotton M.D."/>
            <person name="Roberts K.M."/>
            <person name="Hurst M.A."/>
            <person name="Kaine B.P."/>
            <person name="Borodovsky M."/>
            <person name="Klenk H.-P."/>
            <person name="Fraser C.M."/>
            <person name="Smith H.O."/>
            <person name="Woese C.R."/>
            <person name="Venter J.C."/>
        </authorList>
    </citation>
    <scope>NUCLEOTIDE SEQUENCE [LARGE SCALE GENOMIC DNA]</scope>
    <source>
        <strain>ATCC 43067 / DSM 2661 / JAL-1 / JCM 10045 / NBRC 100440</strain>
    </source>
</reference>
<feature type="chain" id="PRO_0000107140" description="Uncharacterized protein MJ1005">
    <location>
        <begin position="1"/>
        <end position="131"/>
    </location>
</feature>
<dbReference type="EMBL" id="L77117">
    <property type="protein sequence ID" value="AAB99013.1"/>
    <property type="molecule type" value="Genomic_DNA"/>
</dbReference>
<dbReference type="PIR" id="D64425">
    <property type="entry name" value="D64425"/>
</dbReference>
<dbReference type="RefSeq" id="WP_010870518.1">
    <property type="nucleotide sequence ID" value="NC_000909.1"/>
</dbReference>
<dbReference type="SMR" id="Q58411"/>
<dbReference type="FunCoup" id="Q58411">
    <property type="interactions" value="2"/>
</dbReference>
<dbReference type="STRING" id="243232.MJ_1005"/>
<dbReference type="PaxDb" id="243232-MJ_1005"/>
<dbReference type="EnsemblBacteria" id="AAB99013">
    <property type="protein sequence ID" value="AAB99013"/>
    <property type="gene ID" value="MJ_1005"/>
</dbReference>
<dbReference type="GeneID" id="1451902"/>
<dbReference type="KEGG" id="mja:MJ_1005"/>
<dbReference type="eggNOG" id="arCOG05062">
    <property type="taxonomic scope" value="Archaea"/>
</dbReference>
<dbReference type="HOGENOM" id="CLU_158394_0_0_2"/>
<dbReference type="InParanoid" id="Q58411"/>
<dbReference type="OrthoDB" id="63512at2157"/>
<dbReference type="Proteomes" id="UP000000805">
    <property type="component" value="Chromosome"/>
</dbReference>
<dbReference type="Gene3D" id="1.10.10.10">
    <property type="entry name" value="Winged helix-like DNA-binding domain superfamily/Winged helix DNA-binding domain"/>
    <property type="match status" value="1"/>
</dbReference>
<dbReference type="InterPro" id="IPR013196">
    <property type="entry name" value="HTH_11"/>
</dbReference>
<dbReference type="InterPro" id="IPR036388">
    <property type="entry name" value="WH-like_DNA-bd_sf"/>
</dbReference>
<dbReference type="Pfam" id="PF08279">
    <property type="entry name" value="HTH_11"/>
    <property type="match status" value="1"/>
</dbReference>
<gene>
    <name type="ordered locus">MJ1005</name>
</gene>
<proteinExistence type="predicted"/>